<accession>Q1JK46</accession>
<proteinExistence type="inferred from homology"/>
<feature type="chain" id="PRO_1000015332" description="Deoxyribose-phosphate aldolase">
    <location>
        <begin position="1"/>
        <end position="223"/>
    </location>
</feature>
<feature type="active site" description="Proton donor/acceptor" evidence="1">
    <location>
        <position position="91"/>
    </location>
</feature>
<feature type="active site" description="Schiff-base intermediate with acetaldehyde" evidence="1">
    <location>
        <position position="153"/>
    </location>
</feature>
<feature type="active site" description="Proton donor/acceptor" evidence="1">
    <location>
        <position position="182"/>
    </location>
</feature>
<reference key="1">
    <citation type="journal article" date="2006" name="Proc. Natl. Acad. Sci. U.S.A.">
        <title>Molecular genetic anatomy of inter- and intraserotype variation in the human bacterial pathogen group A Streptococcus.</title>
        <authorList>
            <person name="Beres S.B."/>
            <person name="Richter E.W."/>
            <person name="Nagiec M.J."/>
            <person name="Sumby P."/>
            <person name="Porcella S.F."/>
            <person name="DeLeo F.R."/>
            <person name="Musser J.M."/>
        </authorList>
    </citation>
    <scope>NUCLEOTIDE SEQUENCE [LARGE SCALE GENOMIC DNA]</scope>
    <source>
        <strain>MGAS9429</strain>
    </source>
</reference>
<gene>
    <name evidence="1" type="primary">deoC</name>
    <name type="ordered locus">MGAS9429_Spy1590</name>
</gene>
<comment type="function">
    <text evidence="1">Catalyzes a reversible aldol reaction between acetaldehyde and D-glyceraldehyde 3-phosphate to generate 2-deoxy-D-ribose 5-phosphate.</text>
</comment>
<comment type="catalytic activity">
    <reaction evidence="1">
        <text>2-deoxy-D-ribose 5-phosphate = D-glyceraldehyde 3-phosphate + acetaldehyde</text>
        <dbReference type="Rhea" id="RHEA:12821"/>
        <dbReference type="ChEBI" id="CHEBI:15343"/>
        <dbReference type="ChEBI" id="CHEBI:59776"/>
        <dbReference type="ChEBI" id="CHEBI:62877"/>
        <dbReference type="EC" id="4.1.2.4"/>
    </reaction>
</comment>
<comment type="pathway">
    <text evidence="1">Carbohydrate degradation; 2-deoxy-D-ribose 1-phosphate degradation; D-glyceraldehyde 3-phosphate and acetaldehyde from 2-deoxy-alpha-D-ribose 1-phosphate: step 2/2.</text>
</comment>
<comment type="subcellular location">
    <subcellularLocation>
        <location evidence="1">Cytoplasm</location>
    </subcellularLocation>
</comment>
<comment type="similarity">
    <text evidence="1">Belongs to the DeoC/FbaB aldolase family. DeoC type 1 subfamily.</text>
</comment>
<organism>
    <name type="scientific">Streptococcus pyogenes serotype M12 (strain MGAS9429)</name>
    <dbReference type="NCBI Taxonomy" id="370551"/>
    <lineage>
        <taxon>Bacteria</taxon>
        <taxon>Bacillati</taxon>
        <taxon>Bacillota</taxon>
        <taxon>Bacilli</taxon>
        <taxon>Lactobacillales</taxon>
        <taxon>Streptococcaceae</taxon>
        <taxon>Streptococcus</taxon>
    </lineage>
</organism>
<sequence length="223" mass="24021">MEVKDILKTVDHTLLATTATWPEIQTILDDAMAYETASACIPASYVKKAAEYVSGKLAICTVIGFPNGYSTTAAKVFECEDAIQNGADEIDMVINLTDVKNGDFDTVEEEIRQIKAKCQDHILKVIVETCQLTKEELIELCGVVTRSGADFIKTSTGFSTAGATFEDVEVMAKYVGEGVKIKAAGGISSLEDAETFIALGASRLGTSRIIKIVKNEAIKTDSY</sequence>
<dbReference type="EC" id="4.1.2.4" evidence="1"/>
<dbReference type="EMBL" id="CP000259">
    <property type="protein sequence ID" value="ABF32777.1"/>
    <property type="molecule type" value="Genomic_DNA"/>
</dbReference>
<dbReference type="RefSeq" id="WP_002988191.1">
    <property type="nucleotide sequence ID" value="NC_008021.1"/>
</dbReference>
<dbReference type="SMR" id="Q1JK46"/>
<dbReference type="KEGG" id="spk:MGAS9429_Spy1590"/>
<dbReference type="HOGENOM" id="CLU_053595_0_2_9"/>
<dbReference type="UniPathway" id="UPA00002">
    <property type="reaction ID" value="UER00468"/>
</dbReference>
<dbReference type="Proteomes" id="UP000002433">
    <property type="component" value="Chromosome"/>
</dbReference>
<dbReference type="GO" id="GO:0005737">
    <property type="term" value="C:cytoplasm"/>
    <property type="evidence" value="ECO:0007669"/>
    <property type="project" value="UniProtKB-SubCell"/>
</dbReference>
<dbReference type="GO" id="GO:0004139">
    <property type="term" value="F:deoxyribose-phosphate aldolase activity"/>
    <property type="evidence" value="ECO:0007669"/>
    <property type="project" value="UniProtKB-UniRule"/>
</dbReference>
<dbReference type="GO" id="GO:0006018">
    <property type="term" value="P:2-deoxyribose 1-phosphate catabolic process"/>
    <property type="evidence" value="ECO:0007669"/>
    <property type="project" value="UniProtKB-UniRule"/>
</dbReference>
<dbReference type="GO" id="GO:0016052">
    <property type="term" value="P:carbohydrate catabolic process"/>
    <property type="evidence" value="ECO:0007669"/>
    <property type="project" value="TreeGrafter"/>
</dbReference>
<dbReference type="GO" id="GO:0009264">
    <property type="term" value="P:deoxyribonucleotide catabolic process"/>
    <property type="evidence" value="ECO:0007669"/>
    <property type="project" value="InterPro"/>
</dbReference>
<dbReference type="CDD" id="cd00959">
    <property type="entry name" value="DeoC"/>
    <property type="match status" value="1"/>
</dbReference>
<dbReference type="FunFam" id="3.20.20.70:FF:000044">
    <property type="entry name" value="Deoxyribose-phosphate aldolase"/>
    <property type="match status" value="1"/>
</dbReference>
<dbReference type="Gene3D" id="3.20.20.70">
    <property type="entry name" value="Aldolase class I"/>
    <property type="match status" value="1"/>
</dbReference>
<dbReference type="HAMAP" id="MF_00114">
    <property type="entry name" value="DeoC_type1"/>
    <property type="match status" value="1"/>
</dbReference>
<dbReference type="InterPro" id="IPR013785">
    <property type="entry name" value="Aldolase_TIM"/>
</dbReference>
<dbReference type="InterPro" id="IPR011343">
    <property type="entry name" value="DeoC"/>
</dbReference>
<dbReference type="InterPro" id="IPR002915">
    <property type="entry name" value="DeoC/FbaB/LacD_aldolase"/>
</dbReference>
<dbReference type="InterPro" id="IPR028581">
    <property type="entry name" value="DeoC_typeI"/>
</dbReference>
<dbReference type="NCBIfam" id="TIGR00126">
    <property type="entry name" value="deoC"/>
    <property type="match status" value="1"/>
</dbReference>
<dbReference type="PANTHER" id="PTHR10889">
    <property type="entry name" value="DEOXYRIBOSE-PHOSPHATE ALDOLASE"/>
    <property type="match status" value="1"/>
</dbReference>
<dbReference type="PANTHER" id="PTHR10889:SF1">
    <property type="entry name" value="DEOXYRIBOSE-PHOSPHATE ALDOLASE"/>
    <property type="match status" value="1"/>
</dbReference>
<dbReference type="Pfam" id="PF01791">
    <property type="entry name" value="DeoC"/>
    <property type="match status" value="1"/>
</dbReference>
<dbReference type="PIRSF" id="PIRSF001357">
    <property type="entry name" value="DeoC"/>
    <property type="match status" value="1"/>
</dbReference>
<dbReference type="SMART" id="SM01133">
    <property type="entry name" value="DeoC"/>
    <property type="match status" value="1"/>
</dbReference>
<dbReference type="SUPFAM" id="SSF51569">
    <property type="entry name" value="Aldolase"/>
    <property type="match status" value="1"/>
</dbReference>
<name>DEOC_STRPC</name>
<evidence type="ECO:0000255" key="1">
    <source>
        <dbReference type="HAMAP-Rule" id="MF_00114"/>
    </source>
</evidence>
<keyword id="KW-0963">Cytoplasm</keyword>
<keyword id="KW-0456">Lyase</keyword>
<keyword id="KW-0704">Schiff base</keyword>
<protein>
    <recommendedName>
        <fullName evidence="1">Deoxyribose-phosphate aldolase</fullName>
        <shortName evidence="1">DERA</shortName>
        <ecNumber evidence="1">4.1.2.4</ecNumber>
    </recommendedName>
    <alternativeName>
        <fullName evidence="1">2-deoxy-D-ribose 5-phosphate aldolase</fullName>
    </alternativeName>
    <alternativeName>
        <fullName evidence="1">Phosphodeoxyriboaldolase</fullName>
        <shortName evidence="1">Deoxyriboaldolase</shortName>
    </alternativeName>
</protein>